<gene>
    <name evidence="1" type="primary">upp</name>
    <name type="ordered locus">SH0923</name>
</gene>
<keyword id="KW-0021">Allosteric enzyme</keyword>
<keyword id="KW-0328">Glycosyltransferase</keyword>
<keyword id="KW-0342">GTP-binding</keyword>
<keyword id="KW-0460">Magnesium</keyword>
<keyword id="KW-0547">Nucleotide-binding</keyword>
<keyword id="KW-0808">Transferase</keyword>
<accession>Q4L7Z3</accession>
<protein>
    <recommendedName>
        <fullName evidence="1">Uracil phosphoribosyltransferase</fullName>
        <ecNumber evidence="1">2.4.2.9</ecNumber>
    </recommendedName>
    <alternativeName>
        <fullName evidence="1">UMP pyrophosphorylase</fullName>
    </alternativeName>
    <alternativeName>
        <fullName evidence="1">UPRTase</fullName>
    </alternativeName>
</protein>
<evidence type="ECO:0000255" key="1">
    <source>
        <dbReference type="HAMAP-Rule" id="MF_01218"/>
    </source>
</evidence>
<organism>
    <name type="scientific">Staphylococcus haemolyticus (strain JCSC1435)</name>
    <dbReference type="NCBI Taxonomy" id="279808"/>
    <lineage>
        <taxon>Bacteria</taxon>
        <taxon>Bacillati</taxon>
        <taxon>Bacillota</taxon>
        <taxon>Bacilli</taxon>
        <taxon>Bacillales</taxon>
        <taxon>Staphylococcaceae</taxon>
        <taxon>Staphylococcus</taxon>
    </lineage>
</organism>
<reference key="1">
    <citation type="journal article" date="2005" name="J. Bacteriol.">
        <title>Whole-genome sequencing of Staphylococcus haemolyticus uncovers the extreme plasticity of its genome and the evolution of human-colonizing staphylococcal species.</title>
        <authorList>
            <person name="Takeuchi F."/>
            <person name="Watanabe S."/>
            <person name="Baba T."/>
            <person name="Yuzawa H."/>
            <person name="Ito T."/>
            <person name="Morimoto Y."/>
            <person name="Kuroda M."/>
            <person name="Cui L."/>
            <person name="Takahashi M."/>
            <person name="Ankai A."/>
            <person name="Baba S."/>
            <person name="Fukui S."/>
            <person name="Lee J.C."/>
            <person name="Hiramatsu K."/>
        </authorList>
    </citation>
    <scope>NUCLEOTIDE SEQUENCE [LARGE SCALE GENOMIC DNA]</scope>
    <source>
        <strain>JCSC1435</strain>
    </source>
</reference>
<name>UPP_STAHJ</name>
<feature type="chain" id="PRO_0000120887" description="Uracil phosphoribosyltransferase">
    <location>
        <begin position="1"/>
        <end position="209"/>
    </location>
</feature>
<feature type="binding site" evidence="1">
    <location>
        <position position="79"/>
    </location>
    <ligand>
        <name>5-phospho-alpha-D-ribose 1-diphosphate</name>
        <dbReference type="ChEBI" id="CHEBI:58017"/>
    </ligand>
</feature>
<feature type="binding site" evidence="1">
    <location>
        <position position="104"/>
    </location>
    <ligand>
        <name>5-phospho-alpha-D-ribose 1-diphosphate</name>
        <dbReference type="ChEBI" id="CHEBI:58017"/>
    </ligand>
</feature>
<feature type="binding site" evidence="1">
    <location>
        <begin position="131"/>
        <end position="139"/>
    </location>
    <ligand>
        <name>5-phospho-alpha-D-ribose 1-diphosphate</name>
        <dbReference type="ChEBI" id="CHEBI:58017"/>
    </ligand>
</feature>
<feature type="binding site" evidence="1">
    <location>
        <position position="194"/>
    </location>
    <ligand>
        <name>uracil</name>
        <dbReference type="ChEBI" id="CHEBI:17568"/>
    </ligand>
</feature>
<feature type="binding site" evidence="1">
    <location>
        <begin position="199"/>
        <end position="201"/>
    </location>
    <ligand>
        <name>uracil</name>
        <dbReference type="ChEBI" id="CHEBI:17568"/>
    </ligand>
</feature>
<feature type="binding site" evidence="1">
    <location>
        <position position="200"/>
    </location>
    <ligand>
        <name>5-phospho-alpha-D-ribose 1-diphosphate</name>
        <dbReference type="ChEBI" id="CHEBI:58017"/>
    </ligand>
</feature>
<sequence length="209" mass="23075">MSKVHVFDHPLIQHKLSYIRDMNTGTKEFRELVDEVGMLMAYEVTRDLELQDVEIKTPVTTMTAKRLAGKKLAIVPILRAGLGMTDGVLSLVPAARVGHIGLYRDPNTLKAVEYFAKLPQDIDERQIIVVDPMLATGASAIEAINSLKKRGAKNIRFMCLIAAPEGVEKMQEAHDDVDIYIAALDEKLNDKAYITPGLGDAGDRLFGTK</sequence>
<comment type="function">
    <text evidence="1">Catalyzes the conversion of uracil and 5-phospho-alpha-D-ribose 1-diphosphate (PRPP) to UMP and diphosphate.</text>
</comment>
<comment type="catalytic activity">
    <reaction evidence="1">
        <text>UMP + diphosphate = 5-phospho-alpha-D-ribose 1-diphosphate + uracil</text>
        <dbReference type="Rhea" id="RHEA:13017"/>
        <dbReference type="ChEBI" id="CHEBI:17568"/>
        <dbReference type="ChEBI" id="CHEBI:33019"/>
        <dbReference type="ChEBI" id="CHEBI:57865"/>
        <dbReference type="ChEBI" id="CHEBI:58017"/>
        <dbReference type="EC" id="2.4.2.9"/>
    </reaction>
</comment>
<comment type="cofactor">
    <cofactor evidence="1">
        <name>Mg(2+)</name>
        <dbReference type="ChEBI" id="CHEBI:18420"/>
    </cofactor>
    <text evidence="1">Binds 1 Mg(2+) ion per subunit. The magnesium is bound as Mg-PRPP.</text>
</comment>
<comment type="activity regulation">
    <text evidence="1">Allosterically activated by GTP.</text>
</comment>
<comment type="pathway">
    <text evidence="1">Pyrimidine metabolism; UMP biosynthesis via salvage pathway; UMP from uracil: step 1/1.</text>
</comment>
<comment type="similarity">
    <text evidence="1">Belongs to the UPRTase family.</text>
</comment>
<dbReference type="EC" id="2.4.2.9" evidence="1"/>
<dbReference type="EMBL" id="AP006716">
    <property type="protein sequence ID" value="BAE04232.1"/>
    <property type="molecule type" value="Genomic_DNA"/>
</dbReference>
<dbReference type="RefSeq" id="WP_011275234.1">
    <property type="nucleotide sequence ID" value="NC_007168.1"/>
</dbReference>
<dbReference type="SMR" id="Q4L7Z3"/>
<dbReference type="GeneID" id="93780311"/>
<dbReference type="KEGG" id="sha:SH0923"/>
<dbReference type="eggNOG" id="COG0035">
    <property type="taxonomic scope" value="Bacteria"/>
</dbReference>
<dbReference type="HOGENOM" id="CLU_067096_2_2_9"/>
<dbReference type="OrthoDB" id="9781675at2"/>
<dbReference type="UniPathway" id="UPA00574">
    <property type="reaction ID" value="UER00636"/>
</dbReference>
<dbReference type="Proteomes" id="UP000000543">
    <property type="component" value="Chromosome"/>
</dbReference>
<dbReference type="GO" id="GO:0005525">
    <property type="term" value="F:GTP binding"/>
    <property type="evidence" value="ECO:0007669"/>
    <property type="project" value="UniProtKB-KW"/>
</dbReference>
<dbReference type="GO" id="GO:0000287">
    <property type="term" value="F:magnesium ion binding"/>
    <property type="evidence" value="ECO:0007669"/>
    <property type="project" value="UniProtKB-UniRule"/>
</dbReference>
<dbReference type="GO" id="GO:0004845">
    <property type="term" value="F:uracil phosphoribosyltransferase activity"/>
    <property type="evidence" value="ECO:0007669"/>
    <property type="project" value="UniProtKB-UniRule"/>
</dbReference>
<dbReference type="GO" id="GO:0044206">
    <property type="term" value="P:UMP salvage"/>
    <property type="evidence" value="ECO:0007669"/>
    <property type="project" value="UniProtKB-UniRule"/>
</dbReference>
<dbReference type="GO" id="GO:0006223">
    <property type="term" value="P:uracil salvage"/>
    <property type="evidence" value="ECO:0007669"/>
    <property type="project" value="InterPro"/>
</dbReference>
<dbReference type="CDD" id="cd06223">
    <property type="entry name" value="PRTases_typeI"/>
    <property type="match status" value="1"/>
</dbReference>
<dbReference type="FunFam" id="3.40.50.2020:FF:000003">
    <property type="entry name" value="Uracil phosphoribosyltransferase"/>
    <property type="match status" value="1"/>
</dbReference>
<dbReference type="Gene3D" id="3.40.50.2020">
    <property type="match status" value="1"/>
</dbReference>
<dbReference type="HAMAP" id="MF_01218_B">
    <property type="entry name" value="Upp_B"/>
    <property type="match status" value="1"/>
</dbReference>
<dbReference type="InterPro" id="IPR000836">
    <property type="entry name" value="PRibTrfase_dom"/>
</dbReference>
<dbReference type="InterPro" id="IPR029057">
    <property type="entry name" value="PRTase-like"/>
</dbReference>
<dbReference type="InterPro" id="IPR034332">
    <property type="entry name" value="Upp_B"/>
</dbReference>
<dbReference type="InterPro" id="IPR050054">
    <property type="entry name" value="UPRTase/APRTase"/>
</dbReference>
<dbReference type="InterPro" id="IPR005765">
    <property type="entry name" value="Ura_phspho_trans"/>
</dbReference>
<dbReference type="NCBIfam" id="NF001097">
    <property type="entry name" value="PRK00129.1"/>
    <property type="match status" value="1"/>
</dbReference>
<dbReference type="NCBIfam" id="TIGR01091">
    <property type="entry name" value="upp"/>
    <property type="match status" value="1"/>
</dbReference>
<dbReference type="PANTHER" id="PTHR32315">
    <property type="entry name" value="ADENINE PHOSPHORIBOSYLTRANSFERASE"/>
    <property type="match status" value="1"/>
</dbReference>
<dbReference type="PANTHER" id="PTHR32315:SF4">
    <property type="entry name" value="URACIL PHOSPHORIBOSYLTRANSFERASE, CHLOROPLASTIC"/>
    <property type="match status" value="1"/>
</dbReference>
<dbReference type="Pfam" id="PF14681">
    <property type="entry name" value="UPRTase"/>
    <property type="match status" value="1"/>
</dbReference>
<dbReference type="SUPFAM" id="SSF53271">
    <property type="entry name" value="PRTase-like"/>
    <property type="match status" value="1"/>
</dbReference>
<proteinExistence type="inferred from homology"/>